<name>NDHL_SYNR3</name>
<gene>
    <name evidence="1" type="primary">ndhL</name>
    <name type="ordered locus">SynRCC307_1602</name>
</gene>
<evidence type="ECO:0000255" key="1">
    <source>
        <dbReference type="HAMAP-Rule" id="MF_01355"/>
    </source>
</evidence>
<evidence type="ECO:0000305" key="2"/>
<organism>
    <name type="scientific">Synechococcus sp. (strain RCC307)</name>
    <dbReference type="NCBI Taxonomy" id="316278"/>
    <lineage>
        <taxon>Bacteria</taxon>
        <taxon>Bacillati</taxon>
        <taxon>Cyanobacteriota</taxon>
        <taxon>Cyanophyceae</taxon>
        <taxon>Synechococcales</taxon>
        <taxon>Synechococcaceae</taxon>
        <taxon>Synechococcus</taxon>
    </lineage>
</organism>
<accession>A5GUE6</accession>
<reference key="1">
    <citation type="submission" date="2006-05" db="EMBL/GenBank/DDBJ databases">
        <authorList>
            <consortium name="Genoscope"/>
        </authorList>
    </citation>
    <scope>NUCLEOTIDE SEQUENCE [LARGE SCALE GENOMIC DNA]</scope>
    <source>
        <strain>RCC307</strain>
    </source>
</reference>
<feature type="chain" id="PRO_0000353692" description="NAD(P)H-quinone oxidoreductase subunit L">
    <location>
        <begin position="1"/>
        <end position="83"/>
    </location>
</feature>
<feature type="transmembrane region" description="Helical" evidence="1">
    <location>
        <begin position="17"/>
        <end position="37"/>
    </location>
</feature>
<feature type="transmembrane region" description="Helical" evidence="1">
    <location>
        <begin position="53"/>
        <end position="73"/>
    </location>
</feature>
<dbReference type="EC" id="7.1.1.-" evidence="1"/>
<dbReference type="EMBL" id="CT978603">
    <property type="protein sequence ID" value="CAK28505.1"/>
    <property type="status" value="ALT_INIT"/>
    <property type="molecule type" value="Genomic_DNA"/>
</dbReference>
<dbReference type="SMR" id="A5GUE6"/>
<dbReference type="STRING" id="316278.SynRCC307_1602"/>
<dbReference type="KEGG" id="syr:SynRCC307_1602"/>
<dbReference type="eggNOG" id="ENOG5032ZM4">
    <property type="taxonomic scope" value="Bacteria"/>
</dbReference>
<dbReference type="HOGENOM" id="CLU_171077_1_0_3"/>
<dbReference type="OrthoDB" id="517549at2"/>
<dbReference type="Proteomes" id="UP000001115">
    <property type="component" value="Chromosome"/>
</dbReference>
<dbReference type="GO" id="GO:0031676">
    <property type="term" value="C:plasma membrane-derived thylakoid membrane"/>
    <property type="evidence" value="ECO:0007669"/>
    <property type="project" value="UniProtKB-SubCell"/>
</dbReference>
<dbReference type="GO" id="GO:0016655">
    <property type="term" value="F:oxidoreductase activity, acting on NAD(P)H, quinone or similar compound as acceptor"/>
    <property type="evidence" value="ECO:0007669"/>
    <property type="project" value="UniProtKB-UniRule"/>
</dbReference>
<dbReference type="GO" id="GO:0048038">
    <property type="term" value="F:quinone binding"/>
    <property type="evidence" value="ECO:0007669"/>
    <property type="project" value="UniProtKB-KW"/>
</dbReference>
<dbReference type="HAMAP" id="MF_01355">
    <property type="entry name" value="NDH1_NDH1L"/>
    <property type="match status" value="1"/>
</dbReference>
<dbReference type="InterPro" id="IPR019654">
    <property type="entry name" value="NADH-quinone_OxRdatse_su_L"/>
</dbReference>
<dbReference type="PANTHER" id="PTHR36727">
    <property type="entry name" value="NAD(P)H-QUINONE OXIDOREDUCTASE SUBUNIT L, CHLOROPLASTIC"/>
    <property type="match status" value="1"/>
</dbReference>
<dbReference type="PANTHER" id="PTHR36727:SF2">
    <property type="entry name" value="NAD(P)H-QUINONE OXIDOREDUCTASE SUBUNIT L, CHLOROPLASTIC"/>
    <property type="match status" value="1"/>
</dbReference>
<dbReference type="Pfam" id="PF10716">
    <property type="entry name" value="NdhL"/>
    <property type="match status" value="1"/>
</dbReference>
<protein>
    <recommendedName>
        <fullName evidence="1">NAD(P)H-quinone oxidoreductase subunit L</fullName>
        <ecNumber evidence="1">7.1.1.-</ecNumber>
    </recommendedName>
    <alternativeName>
        <fullName evidence="1">NAD(P)H dehydrogenase I subunit L</fullName>
    </alternativeName>
    <alternativeName>
        <fullName>NDH-1 subunit L</fullName>
    </alternativeName>
    <alternativeName>
        <fullName>NDH-L</fullName>
    </alternativeName>
</protein>
<keyword id="KW-0472">Membrane</keyword>
<keyword id="KW-0520">NAD</keyword>
<keyword id="KW-0521">NADP</keyword>
<keyword id="KW-0618">Plastoquinone</keyword>
<keyword id="KW-0874">Quinone</keyword>
<keyword id="KW-1185">Reference proteome</keyword>
<keyword id="KW-0793">Thylakoid</keyword>
<keyword id="KW-1278">Translocase</keyword>
<keyword id="KW-0812">Transmembrane</keyword>
<keyword id="KW-1133">Transmembrane helix</keyword>
<keyword id="KW-0813">Transport</keyword>
<comment type="function">
    <text evidence="1">NDH-1 shuttles electrons from an unknown electron donor, via FMN and iron-sulfur (Fe-S) centers, to quinones in the respiratory and/or the photosynthetic chain. The immediate electron acceptor for the enzyme in this species is believed to be plastoquinone. Couples the redox reaction to proton translocation, and thus conserves the redox energy in a proton gradient. Cyanobacterial NDH-1 also plays a role in inorganic carbon-concentration.</text>
</comment>
<comment type="catalytic activity">
    <reaction evidence="1">
        <text>a plastoquinone + NADH + (n+1) H(+)(in) = a plastoquinol + NAD(+) + n H(+)(out)</text>
        <dbReference type="Rhea" id="RHEA:42608"/>
        <dbReference type="Rhea" id="RHEA-COMP:9561"/>
        <dbReference type="Rhea" id="RHEA-COMP:9562"/>
        <dbReference type="ChEBI" id="CHEBI:15378"/>
        <dbReference type="ChEBI" id="CHEBI:17757"/>
        <dbReference type="ChEBI" id="CHEBI:57540"/>
        <dbReference type="ChEBI" id="CHEBI:57945"/>
        <dbReference type="ChEBI" id="CHEBI:62192"/>
    </reaction>
</comment>
<comment type="catalytic activity">
    <reaction evidence="1">
        <text>a plastoquinone + NADPH + (n+1) H(+)(in) = a plastoquinol + NADP(+) + n H(+)(out)</text>
        <dbReference type="Rhea" id="RHEA:42612"/>
        <dbReference type="Rhea" id="RHEA-COMP:9561"/>
        <dbReference type="Rhea" id="RHEA-COMP:9562"/>
        <dbReference type="ChEBI" id="CHEBI:15378"/>
        <dbReference type="ChEBI" id="CHEBI:17757"/>
        <dbReference type="ChEBI" id="CHEBI:57783"/>
        <dbReference type="ChEBI" id="CHEBI:58349"/>
        <dbReference type="ChEBI" id="CHEBI:62192"/>
    </reaction>
</comment>
<comment type="subunit">
    <text evidence="1">NDH-1 can be composed of about 15 different subunits; different subcomplexes with different compositions have been identified which probably have different functions.</text>
</comment>
<comment type="subcellular location">
    <subcellularLocation>
        <location evidence="1">Cellular thylakoid membrane</location>
        <topology evidence="1">Multi-pass membrane protein</topology>
    </subcellularLocation>
</comment>
<comment type="similarity">
    <text evidence="1">Belongs to the complex I NdhL subunit family.</text>
</comment>
<comment type="sequence caution" evidence="2">
    <conflict type="erroneous initiation">
        <sequence resource="EMBL-CDS" id="CAK28505"/>
    </conflict>
</comment>
<sequence length="83" mass="9291">MPFQQLLSQLPDQALPVLLAYGALGGAYLLVVPLALLLWMNKRWHQMGKIERTAIYGMVFLFFPGLILFAPFINLRMAGQGEA</sequence>
<proteinExistence type="inferred from homology"/>